<protein>
    <recommendedName>
        <fullName evidence="1">Acetylglutamate kinase</fullName>
        <ecNumber evidence="1">2.7.2.8</ecNumber>
    </recommendedName>
    <alternativeName>
        <fullName evidence="1">N-acetyl-L-glutamate 5-phosphotransferase</fullName>
    </alternativeName>
    <alternativeName>
        <fullName evidence="1">NAG kinase</fullName>
        <shortName evidence="1">NAGK</shortName>
    </alternativeName>
</protein>
<reference key="1">
    <citation type="submission" date="2008-02" db="EMBL/GenBank/DDBJ databases">
        <title>Complete sequence of Pseudomonas putida W619.</title>
        <authorList>
            <person name="Copeland A."/>
            <person name="Lucas S."/>
            <person name="Lapidus A."/>
            <person name="Barry K."/>
            <person name="Detter J.C."/>
            <person name="Glavina del Rio T."/>
            <person name="Dalin E."/>
            <person name="Tice H."/>
            <person name="Pitluck S."/>
            <person name="Chain P."/>
            <person name="Malfatti S."/>
            <person name="Shin M."/>
            <person name="Vergez L."/>
            <person name="Schmutz J."/>
            <person name="Larimer F."/>
            <person name="Land M."/>
            <person name="Hauser L."/>
            <person name="Kyrpides N."/>
            <person name="Kim E."/>
            <person name="Taghavi S."/>
            <person name="Vangronsveld D."/>
            <person name="van der Lelie D."/>
            <person name="Richardson P."/>
        </authorList>
    </citation>
    <scope>NUCLEOTIDE SEQUENCE [LARGE SCALE GENOMIC DNA]</scope>
    <source>
        <strain>W619</strain>
    </source>
</reference>
<evidence type="ECO:0000255" key="1">
    <source>
        <dbReference type="HAMAP-Rule" id="MF_00082"/>
    </source>
</evidence>
<keyword id="KW-0028">Amino-acid biosynthesis</keyword>
<keyword id="KW-0055">Arginine biosynthesis</keyword>
<keyword id="KW-0067">ATP-binding</keyword>
<keyword id="KW-0963">Cytoplasm</keyword>
<keyword id="KW-0418">Kinase</keyword>
<keyword id="KW-0547">Nucleotide-binding</keyword>
<keyword id="KW-0808">Transferase</keyword>
<comment type="function">
    <text evidence="1">Catalyzes the ATP-dependent phosphorylation of N-acetyl-L-glutamate.</text>
</comment>
<comment type="catalytic activity">
    <reaction evidence="1">
        <text>N-acetyl-L-glutamate + ATP = N-acetyl-L-glutamyl 5-phosphate + ADP</text>
        <dbReference type="Rhea" id="RHEA:14629"/>
        <dbReference type="ChEBI" id="CHEBI:30616"/>
        <dbReference type="ChEBI" id="CHEBI:44337"/>
        <dbReference type="ChEBI" id="CHEBI:57936"/>
        <dbReference type="ChEBI" id="CHEBI:456216"/>
        <dbReference type="EC" id="2.7.2.8"/>
    </reaction>
</comment>
<comment type="pathway">
    <text evidence="1">Amino-acid biosynthesis; L-arginine biosynthesis; N(2)-acetyl-L-ornithine from L-glutamate: step 2/4.</text>
</comment>
<comment type="subcellular location">
    <subcellularLocation>
        <location evidence="1">Cytoplasm</location>
    </subcellularLocation>
</comment>
<comment type="similarity">
    <text evidence="1">Belongs to the acetylglutamate kinase family. ArgB subfamily.</text>
</comment>
<sequence length="301" mass="31950">MTLDRDAASHVAEVLSEALPYIRRFVGKTLVIKYGGNAMESEELKTGFARDIVLMKAVGINPVVVHGGGPQIGDLLKRLSIESHFIDGMRVTDAATMDVVEMVLGGQVNKDIVNLINRHGGSAIGLTGKDAELIRAKKLTVSRQTPEMTQPEIIDIGHVGEVVSVNTDLLNMLVKGDFIPVIAPIGVGANGESYNINADLVAGKVAEALKAEKLMLLTNIAGLMDKQGQVLTGLTTEQVNELIADGTIYGGMLPKIKCALEAVQGGVNSSHIIDGRVPNAVLLEIFTDSGVGTLITNRKPR</sequence>
<feature type="chain" id="PRO_1000092873" description="Acetylglutamate kinase">
    <location>
        <begin position="1"/>
        <end position="301"/>
    </location>
</feature>
<feature type="binding site" evidence="1">
    <location>
        <begin position="68"/>
        <end position="69"/>
    </location>
    <ligand>
        <name>substrate</name>
    </ligand>
</feature>
<feature type="binding site" evidence="1">
    <location>
        <position position="90"/>
    </location>
    <ligand>
        <name>substrate</name>
    </ligand>
</feature>
<feature type="binding site" evidence="1">
    <location>
        <position position="195"/>
    </location>
    <ligand>
        <name>substrate</name>
    </ligand>
</feature>
<feature type="site" description="Transition state stabilizer" evidence="1">
    <location>
        <position position="33"/>
    </location>
</feature>
<feature type="site" description="Transition state stabilizer" evidence="1">
    <location>
        <position position="255"/>
    </location>
</feature>
<accession>B1J4L7</accession>
<proteinExistence type="inferred from homology"/>
<organism>
    <name type="scientific">Pseudomonas putida (strain W619)</name>
    <dbReference type="NCBI Taxonomy" id="390235"/>
    <lineage>
        <taxon>Bacteria</taxon>
        <taxon>Pseudomonadati</taxon>
        <taxon>Pseudomonadota</taxon>
        <taxon>Gammaproteobacteria</taxon>
        <taxon>Pseudomonadales</taxon>
        <taxon>Pseudomonadaceae</taxon>
        <taxon>Pseudomonas</taxon>
    </lineage>
</organism>
<name>ARGB_PSEPW</name>
<dbReference type="EC" id="2.7.2.8" evidence="1"/>
<dbReference type="EMBL" id="CP000949">
    <property type="protein sequence ID" value="ACA70688.1"/>
    <property type="molecule type" value="Genomic_DNA"/>
</dbReference>
<dbReference type="SMR" id="B1J4L7"/>
<dbReference type="STRING" id="390235.PputW619_0182"/>
<dbReference type="KEGG" id="ppw:PputW619_0182"/>
<dbReference type="eggNOG" id="COG0548">
    <property type="taxonomic scope" value="Bacteria"/>
</dbReference>
<dbReference type="HOGENOM" id="CLU_053680_0_0_6"/>
<dbReference type="OrthoDB" id="9803155at2"/>
<dbReference type="UniPathway" id="UPA00068">
    <property type="reaction ID" value="UER00107"/>
</dbReference>
<dbReference type="GO" id="GO:0005737">
    <property type="term" value="C:cytoplasm"/>
    <property type="evidence" value="ECO:0007669"/>
    <property type="project" value="UniProtKB-SubCell"/>
</dbReference>
<dbReference type="GO" id="GO:0003991">
    <property type="term" value="F:acetylglutamate kinase activity"/>
    <property type="evidence" value="ECO:0007669"/>
    <property type="project" value="UniProtKB-UniRule"/>
</dbReference>
<dbReference type="GO" id="GO:0005524">
    <property type="term" value="F:ATP binding"/>
    <property type="evidence" value="ECO:0007669"/>
    <property type="project" value="UniProtKB-UniRule"/>
</dbReference>
<dbReference type="GO" id="GO:0042450">
    <property type="term" value="P:arginine biosynthetic process via ornithine"/>
    <property type="evidence" value="ECO:0007669"/>
    <property type="project" value="UniProtKB-UniRule"/>
</dbReference>
<dbReference type="GO" id="GO:0006526">
    <property type="term" value="P:L-arginine biosynthetic process"/>
    <property type="evidence" value="ECO:0007669"/>
    <property type="project" value="UniProtKB-UniPathway"/>
</dbReference>
<dbReference type="CDD" id="cd04250">
    <property type="entry name" value="AAK_NAGK-C"/>
    <property type="match status" value="1"/>
</dbReference>
<dbReference type="FunFam" id="3.40.1160.10:FF:000004">
    <property type="entry name" value="Acetylglutamate kinase"/>
    <property type="match status" value="1"/>
</dbReference>
<dbReference type="Gene3D" id="3.40.1160.10">
    <property type="entry name" value="Acetylglutamate kinase-like"/>
    <property type="match status" value="1"/>
</dbReference>
<dbReference type="HAMAP" id="MF_00082">
    <property type="entry name" value="ArgB"/>
    <property type="match status" value="1"/>
</dbReference>
<dbReference type="InterPro" id="IPR036393">
    <property type="entry name" value="AceGlu_kinase-like_sf"/>
</dbReference>
<dbReference type="InterPro" id="IPR004662">
    <property type="entry name" value="AcgluKinase_fam"/>
</dbReference>
<dbReference type="InterPro" id="IPR037528">
    <property type="entry name" value="ArgB"/>
</dbReference>
<dbReference type="InterPro" id="IPR001048">
    <property type="entry name" value="Asp/Glu/Uridylate_kinase"/>
</dbReference>
<dbReference type="InterPro" id="IPR001057">
    <property type="entry name" value="Glu/AcGlu_kinase"/>
</dbReference>
<dbReference type="InterPro" id="IPR041727">
    <property type="entry name" value="NAGK-C"/>
</dbReference>
<dbReference type="NCBIfam" id="TIGR00761">
    <property type="entry name" value="argB"/>
    <property type="match status" value="1"/>
</dbReference>
<dbReference type="PANTHER" id="PTHR23342">
    <property type="entry name" value="N-ACETYLGLUTAMATE SYNTHASE"/>
    <property type="match status" value="1"/>
</dbReference>
<dbReference type="PANTHER" id="PTHR23342:SF0">
    <property type="entry name" value="N-ACETYLGLUTAMATE SYNTHASE, MITOCHONDRIAL"/>
    <property type="match status" value="1"/>
</dbReference>
<dbReference type="Pfam" id="PF00696">
    <property type="entry name" value="AA_kinase"/>
    <property type="match status" value="1"/>
</dbReference>
<dbReference type="PIRSF" id="PIRSF000728">
    <property type="entry name" value="NAGK"/>
    <property type="match status" value="1"/>
</dbReference>
<dbReference type="PRINTS" id="PR00474">
    <property type="entry name" value="GLU5KINASE"/>
</dbReference>
<dbReference type="SUPFAM" id="SSF53633">
    <property type="entry name" value="Carbamate kinase-like"/>
    <property type="match status" value="1"/>
</dbReference>
<gene>
    <name evidence="1" type="primary">argB</name>
    <name type="ordered locus">PputW619_0182</name>
</gene>